<comment type="subunit">
    <text evidence="1">Forms oligomers.</text>
</comment>
<comment type="subcellular location">
    <subcellularLocation>
        <location evidence="1">Cytoplasm</location>
        <location evidence="1">Nucleoid</location>
    </subcellularLocation>
</comment>
<comment type="similarity">
    <text evidence="1">Belongs to the MraZ family.</text>
</comment>
<keyword id="KW-0963">Cytoplasm</keyword>
<keyword id="KW-0238">DNA-binding</keyword>
<keyword id="KW-1185">Reference proteome</keyword>
<keyword id="KW-0677">Repeat</keyword>
<keyword id="KW-0804">Transcription</keyword>
<keyword id="KW-0805">Transcription regulation</keyword>
<protein>
    <recommendedName>
        <fullName>Transcriptional regulator MraZ</fullName>
    </recommendedName>
</protein>
<name>MRAZ_LEIXX</name>
<feature type="chain" id="PRO_0000108494" description="Transcriptional regulator MraZ">
    <location>
        <begin position="1"/>
        <end position="143"/>
    </location>
</feature>
<feature type="domain" description="SpoVT-AbrB 1" evidence="2">
    <location>
        <begin position="5"/>
        <end position="47"/>
    </location>
</feature>
<feature type="domain" description="SpoVT-AbrB 2" evidence="2">
    <location>
        <begin position="76"/>
        <end position="119"/>
    </location>
</feature>
<dbReference type="EMBL" id="AE016822">
    <property type="protein sequence ID" value="AAT89341.1"/>
    <property type="molecule type" value="Genomic_DNA"/>
</dbReference>
<dbReference type="RefSeq" id="WP_011186331.1">
    <property type="nucleotide sequence ID" value="NC_006087.1"/>
</dbReference>
<dbReference type="SMR" id="Q6AE55"/>
<dbReference type="STRING" id="281090.Lxx15350"/>
<dbReference type="KEGG" id="lxx:Lxx15350"/>
<dbReference type="eggNOG" id="COG2001">
    <property type="taxonomic scope" value="Bacteria"/>
</dbReference>
<dbReference type="HOGENOM" id="CLU_107907_0_5_11"/>
<dbReference type="Proteomes" id="UP000001306">
    <property type="component" value="Chromosome"/>
</dbReference>
<dbReference type="GO" id="GO:0005737">
    <property type="term" value="C:cytoplasm"/>
    <property type="evidence" value="ECO:0007669"/>
    <property type="project" value="UniProtKB-UniRule"/>
</dbReference>
<dbReference type="GO" id="GO:0009295">
    <property type="term" value="C:nucleoid"/>
    <property type="evidence" value="ECO:0007669"/>
    <property type="project" value="UniProtKB-SubCell"/>
</dbReference>
<dbReference type="GO" id="GO:0003700">
    <property type="term" value="F:DNA-binding transcription factor activity"/>
    <property type="evidence" value="ECO:0007669"/>
    <property type="project" value="UniProtKB-UniRule"/>
</dbReference>
<dbReference type="GO" id="GO:0000976">
    <property type="term" value="F:transcription cis-regulatory region binding"/>
    <property type="evidence" value="ECO:0007669"/>
    <property type="project" value="TreeGrafter"/>
</dbReference>
<dbReference type="GO" id="GO:2000143">
    <property type="term" value="P:negative regulation of DNA-templated transcription initiation"/>
    <property type="evidence" value="ECO:0007669"/>
    <property type="project" value="TreeGrafter"/>
</dbReference>
<dbReference type="CDD" id="cd16321">
    <property type="entry name" value="MraZ_C"/>
    <property type="match status" value="1"/>
</dbReference>
<dbReference type="CDD" id="cd16320">
    <property type="entry name" value="MraZ_N"/>
    <property type="match status" value="1"/>
</dbReference>
<dbReference type="Gene3D" id="3.40.1550.20">
    <property type="entry name" value="Transcriptional regulator MraZ domain"/>
    <property type="match status" value="1"/>
</dbReference>
<dbReference type="HAMAP" id="MF_01008">
    <property type="entry name" value="MraZ"/>
    <property type="match status" value="1"/>
</dbReference>
<dbReference type="InterPro" id="IPR003444">
    <property type="entry name" value="MraZ"/>
</dbReference>
<dbReference type="InterPro" id="IPR035644">
    <property type="entry name" value="MraZ_C"/>
</dbReference>
<dbReference type="InterPro" id="IPR020603">
    <property type="entry name" value="MraZ_dom"/>
</dbReference>
<dbReference type="InterPro" id="IPR035642">
    <property type="entry name" value="MraZ_N"/>
</dbReference>
<dbReference type="InterPro" id="IPR038619">
    <property type="entry name" value="MraZ_sf"/>
</dbReference>
<dbReference type="InterPro" id="IPR007159">
    <property type="entry name" value="SpoVT-AbrB_dom"/>
</dbReference>
<dbReference type="InterPro" id="IPR037914">
    <property type="entry name" value="SpoVT-AbrB_sf"/>
</dbReference>
<dbReference type="NCBIfam" id="TIGR00242">
    <property type="entry name" value="division/cell wall cluster transcriptional repressor MraZ"/>
    <property type="match status" value="1"/>
</dbReference>
<dbReference type="PANTHER" id="PTHR34701">
    <property type="entry name" value="TRANSCRIPTIONAL REGULATOR MRAZ"/>
    <property type="match status" value="1"/>
</dbReference>
<dbReference type="PANTHER" id="PTHR34701:SF1">
    <property type="entry name" value="TRANSCRIPTIONAL REGULATOR MRAZ"/>
    <property type="match status" value="1"/>
</dbReference>
<dbReference type="Pfam" id="PF02381">
    <property type="entry name" value="MraZ"/>
    <property type="match status" value="2"/>
</dbReference>
<dbReference type="SUPFAM" id="SSF89447">
    <property type="entry name" value="AbrB/MazE/MraZ-like"/>
    <property type="match status" value="1"/>
</dbReference>
<dbReference type="PROSITE" id="PS51740">
    <property type="entry name" value="SPOVT_ABRB"/>
    <property type="match status" value="2"/>
</dbReference>
<organism>
    <name type="scientific">Leifsonia xyli subsp. xyli (strain CTCB07)</name>
    <dbReference type="NCBI Taxonomy" id="281090"/>
    <lineage>
        <taxon>Bacteria</taxon>
        <taxon>Bacillati</taxon>
        <taxon>Actinomycetota</taxon>
        <taxon>Actinomycetes</taxon>
        <taxon>Micrococcales</taxon>
        <taxon>Microbacteriaceae</taxon>
        <taxon>Leifsonia</taxon>
    </lineage>
</organism>
<evidence type="ECO:0000255" key="1">
    <source>
        <dbReference type="HAMAP-Rule" id="MF_01008"/>
    </source>
</evidence>
<evidence type="ECO:0000255" key="2">
    <source>
        <dbReference type="PROSITE-ProRule" id="PRU01076"/>
    </source>
</evidence>
<accession>Q6AE55</accession>
<gene>
    <name evidence="1" type="primary">mraZ</name>
    <name type="ordered locus">Lxx15350</name>
</gene>
<reference key="1">
    <citation type="journal article" date="2004" name="Mol. Plant Microbe Interact.">
        <title>The genome sequence of the Gram-positive sugarcane pathogen Leifsonia xyli subsp. xyli.</title>
        <authorList>
            <person name="Monteiro-Vitorello C.B."/>
            <person name="Camargo L.E.A."/>
            <person name="Van Sluys M.A."/>
            <person name="Kitajima J.P."/>
            <person name="Truffi D."/>
            <person name="do Amaral A.M."/>
            <person name="Harakava R."/>
            <person name="de Oliveira J.C.F."/>
            <person name="Wood D."/>
            <person name="de Oliveira M.C."/>
            <person name="Miyaki C.Y."/>
            <person name="Takita M.A."/>
            <person name="da Silva A.C.R."/>
            <person name="Furlan L.R."/>
            <person name="Carraro D.M."/>
            <person name="Camarotte G."/>
            <person name="Almeida N.F. Jr."/>
            <person name="Carrer H."/>
            <person name="Coutinho L.L."/>
            <person name="El-Dorry H.A."/>
            <person name="Ferro M.I.T."/>
            <person name="Gagliardi P.R."/>
            <person name="Giglioti E."/>
            <person name="Goldman M.H.S."/>
            <person name="Goldman G.H."/>
            <person name="Kimura E.T."/>
            <person name="Ferro E.S."/>
            <person name="Kuramae E.E."/>
            <person name="Lemos E.G.M."/>
            <person name="Lemos M.V.F."/>
            <person name="Mauro S.M.Z."/>
            <person name="Machado M.A."/>
            <person name="Marino C.L."/>
            <person name="Menck C.F."/>
            <person name="Nunes L.R."/>
            <person name="Oliveira R.C."/>
            <person name="Pereira G.G."/>
            <person name="Siqueira W."/>
            <person name="de Souza A.A."/>
            <person name="Tsai S.M."/>
            <person name="Zanca A.S."/>
            <person name="Simpson A.J.G."/>
            <person name="Brumbley S.M."/>
            <person name="Setubal J.C."/>
        </authorList>
    </citation>
    <scope>NUCLEOTIDE SEQUENCE [LARGE SCALE GENOMIC DNA]</scope>
    <source>
        <strain>CTCB07</strain>
    </source>
</reference>
<sequence length="143" mass="16042">MFLGTYAPKLDEKGRIILPAKFREELASGLVLTRGQEHCVYVFSQREFQSLHEKIRQAPVTSKQARDYLRVFLSGASAEVPDKQNRVTVPPALRSYAGLDRDLVVIGAGSRAEIWDAEAWETYLAKQEAAFANTEEEVIPGLF</sequence>
<proteinExistence type="inferred from homology"/>